<name>SDHF2_DROGR</name>
<evidence type="ECO:0000255" key="1">
    <source>
        <dbReference type="HAMAP-Rule" id="MF_03057"/>
    </source>
</evidence>
<dbReference type="EMBL" id="CH916367">
    <property type="protein sequence ID" value="EDW00786.1"/>
    <property type="molecule type" value="Genomic_DNA"/>
</dbReference>
<dbReference type="RefSeq" id="XP_001985919.1">
    <property type="nucleotide sequence ID" value="XM_001985883.1"/>
</dbReference>
<dbReference type="SMR" id="B4J5U3"/>
<dbReference type="STRING" id="7222.B4J5U3"/>
<dbReference type="EnsemblMetazoa" id="FBtr0465451">
    <property type="protein sequence ID" value="FBpp0415695"/>
    <property type="gene ID" value="FBgn0128290"/>
</dbReference>
<dbReference type="EnsemblMetazoa" id="XM_001985883.3">
    <property type="protein sequence ID" value="XP_001985919.2"/>
    <property type="gene ID" value="LOC6560202"/>
</dbReference>
<dbReference type="GeneID" id="6560202"/>
<dbReference type="KEGG" id="dgr:6560202"/>
<dbReference type="eggNOG" id="KOG3326">
    <property type="taxonomic scope" value="Eukaryota"/>
</dbReference>
<dbReference type="HOGENOM" id="CLU_103054_0_3_1"/>
<dbReference type="InParanoid" id="B4J5U3"/>
<dbReference type="OMA" id="TFAGKYL"/>
<dbReference type="OrthoDB" id="284292at2759"/>
<dbReference type="PhylomeDB" id="B4J5U3"/>
<dbReference type="Proteomes" id="UP000001070">
    <property type="component" value="Unassembled WGS sequence"/>
</dbReference>
<dbReference type="GO" id="GO:0005759">
    <property type="term" value="C:mitochondrial matrix"/>
    <property type="evidence" value="ECO:0007669"/>
    <property type="project" value="UniProtKB-SubCell"/>
</dbReference>
<dbReference type="GO" id="GO:0005739">
    <property type="term" value="C:mitochondrion"/>
    <property type="evidence" value="ECO:0000250"/>
    <property type="project" value="UniProtKB"/>
</dbReference>
<dbReference type="GO" id="GO:0055070">
    <property type="term" value="P:copper ion homeostasis"/>
    <property type="evidence" value="ECO:0007669"/>
    <property type="project" value="EnsemblMetazoa"/>
</dbReference>
<dbReference type="GO" id="GO:0006121">
    <property type="term" value="P:mitochondrial electron transport, succinate to ubiquinone"/>
    <property type="evidence" value="ECO:0000250"/>
    <property type="project" value="UniProtKB"/>
</dbReference>
<dbReference type="GO" id="GO:0034553">
    <property type="term" value="P:mitochondrial respiratory chain complex II assembly"/>
    <property type="evidence" value="ECO:0007669"/>
    <property type="project" value="TreeGrafter"/>
</dbReference>
<dbReference type="GO" id="GO:0018293">
    <property type="term" value="P:protein-FAD linkage"/>
    <property type="evidence" value="ECO:0000250"/>
    <property type="project" value="UniProtKB"/>
</dbReference>
<dbReference type="GO" id="GO:0006099">
    <property type="term" value="P:tricarboxylic acid cycle"/>
    <property type="evidence" value="ECO:0007669"/>
    <property type="project" value="TreeGrafter"/>
</dbReference>
<dbReference type="FunFam" id="1.10.150.250:FF:000002">
    <property type="entry name" value="Succinate dehydrogenase assembly factor 2, mitochondrial"/>
    <property type="match status" value="1"/>
</dbReference>
<dbReference type="Gene3D" id="1.10.150.250">
    <property type="entry name" value="Flavinator of succinate dehydrogenase"/>
    <property type="match status" value="1"/>
</dbReference>
<dbReference type="HAMAP" id="MF_03057">
    <property type="entry name" value="SDHAF2"/>
    <property type="match status" value="1"/>
</dbReference>
<dbReference type="InterPro" id="IPR005631">
    <property type="entry name" value="SDH"/>
</dbReference>
<dbReference type="InterPro" id="IPR036714">
    <property type="entry name" value="SDH_sf"/>
</dbReference>
<dbReference type="InterPro" id="IPR028882">
    <property type="entry name" value="SDHAF2"/>
</dbReference>
<dbReference type="PANTHER" id="PTHR12469">
    <property type="entry name" value="PROTEIN EMI5 HOMOLOG, MITOCHONDRIAL"/>
    <property type="match status" value="1"/>
</dbReference>
<dbReference type="PANTHER" id="PTHR12469:SF2">
    <property type="entry name" value="SUCCINATE DEHYDROGENASE ASSEMBLY FACTOR 2, MITOCHONDRIAL"/>
    <property type="match status" value="1"/>
</dbReference>
<dbReference type="Pfam" id="PF03937">
    <property type="entry name" value="Sdh5"/>
    <property type="match status" value="1"/>
</dbReference>
<dbReference type="SUPFAM" id="SSF109910">
    <property type="entry name" value="YgfY-like"/>
    <property type="match status" value="1"/>
</dbReference>
<organism>
    <name type="scientific">Drosophila grimshawi</name>
    <name type="common">Hawaiian fruit fly</name>
    <name type="synonym">Idiomyia grimshawi</name>
    <dbReference type="NCBI Taxonomy" id="7222"/>
    <lineage>
        <taxon>Eukaryota</taxon>
        <taxon>Metazoa</taxon>
        <taxon>Ecdysozoa</taxon>
        <taxon>Arthropoda</taxon>
        <taxon>Hexapoda</taxon>
        <taxon>Insecta</taxon>
        <taxon>Pterygota</taxon>
        <taxon>Neoptera</taxon>
        <taxon>Endopterygota</taxon>
        <taxon>Diptera</taxon>
        <taxon>Brachycera</taxon>
        <taxon>Muscomorpha</taxon>
        <taxon>Ephydroidea</taxon>
        <taxon>Drosophilidae</taxon>
        <taxon>Drosophila</taxon>
        <taxon>Hawaiian Drosophila</taxon>
    </lineage>
</organism>
<comment type="function">
    <text evidence="1">Plays an essential role in the assembly of succinate dehydrogenase (SDH), an enzyme complex (also referred to as respiratory complex II) that is a component of both the tricarboxylic acid (TCA) cycle and the mitochondrial electron transport chain, and which couples the oxidation of succinate to fumarate with the reduction of ubiquinone (coenzyme Q) to ubiquinol. Required for flavinylation (covalent attachment of FAD) of the flavoprotein subunit of the SDH catalytic dimer.</text>
</comment>
<comment type="subunit">
    <text evidence="1">Interacts with the flavoprotein subunit within the SDH catalytic dimer.</text>
</comment>
<comment type="subcellular location">
    <subcellularLocation>
        <location evidence="1">Mitochondrion matrix</location>
    </subcellularLocation>
</comment>
<comment type="miscellaneous">
    <text evidence="1">This protein may be expected to contain an N-terminal transit peptide but none has been predicted.</text>
</comment>
<comment type="similarity">
    <text evidence="1">Belongs to the SDHAF2 family.</text>
</comment>
<keyword id="KW-0143">Chaperone</keyword>
<keyword id="KW-0496">Mitochondrion</keyword>
<keyword id="KW-1185">Reference proteome</keyword>
<gene>
    <name type="ORF">GH20828</name>
</gene>
<sequence>MVRSLLPLSWRRCASDSSNSSTNDDIIVDYDGPDLPLPEYPNRPNEPLGMRKQRLLYQSRKRGMLENDLLLSTFAHKYLKDFDEDETAIYDELINGVSNDWDIYYWATGVKPTPPQYETDIMELLKQHVKNTEKVARFRQPELTYYL</sequence>
<feature type="chain" id="PRO_0000383166" description="Succinate dehydrogenase assembly factor 2, mitochondrial">
    <location>
        <begin position="1"/>
        <end position="147"/>
    </location>
</feature>
<proteinExistence type="inferred from homology"/>
<accession>B4J5U3</accession>
<reference key="1">
    <citation type="journal article" date="2007" name="Nature">
        <title>Evolution of genes and genomes on the Drosophila phylogeny.</title>
        <authorList>
            <consortium name="Drosophila 12 genomes consortium"/>
        </authorList>
    </citation>
    <scope>NUCLEOTIDE SEQUENCE [LARGE SCALE GENOMIC DNA]</scope>
    <source>
        <strain>Tucson 15287-2541.00</strain>
    </source>
</reference>
<protein>
    <recommendedName>
        <fullName evidence="1">Succinate dehydrogenase assembly factor 2, mitochondrial</fullName>
        <shortName evidence="1">SDH assembly factor 2</shortName>
        <shortName evidence="1">SDHAF2</shortName>
    </recommendedName>
</protein>